<comment type="catalytic activity">
    <reaction evidence="1">
        <text>tRNA(Asn) + L-asparagine + ATP = L-asparaginyl-tRNA(Asn) + AMP + diphosphate + H(+)</text>
        <dbReference type="Rhea" id="RHEA:11180"/>
        <dbReference type="Rhea" id="RHEA-COMP:9659"/>
        <dbReference type="Rhea" id="RHEA-COMP:9674"/>
        <dbReference type="ChEBI" id="CHEBI:15378"/>
        <dbReference type="ChEBI" id="CHEBI:30616"/>
        <dbReference type="ChEBI" id="CHEBI:33019"/>
        <dbReference type="ChEBI" id="CHEBI:58048"/>
        <dbReference type="ChEBI" id="CHEBI:78442"/>
        <dbReference type="ChEBI" id="CHEBI:78515"/>
        <dbReference type="ChEBI" id="CHEBI:456215"/>
        <dbReference type="EC" id="6.1.1.22"/>
    </reaction>
</comment>
<comment type="subunit">
    <text evidence="1">Homodimer.</text>
</comment>
<comment type="subcellular location">
    <subcellularLocation>
        <location evidence="1">Cytoplasm</location>
    </subcellularLocation>
</comment>
<comment type="similarity">
    <text evidence="1">Belongs to the class-II aminoacyl-tRNA synthetase family.</text>
</comment>
<feature type="chain" id="PRO_1000051452" description="Asparagine--tRNA ligase">
    <location>
        <begin position="1"/>
        <end position="448"/>
    </location>
</feature>
<gene>
    <name evidence="1" type="primary">asnS</name>
    <name type="ordered locus">stu0818</name>
</gene>
<proteinExistence type="inferred from homology"/>
<protein>
    <recommendedName>
        <fullName evidence="1">Asparagine--tRNA ligase</fullName>
        <ecNumber evidence="1">6.1.1.22</ecNumber>
    </recommendedName>
    <alternativeName>
        <fullName evidence="1">Asparaginyl-tRNA synthetase</fullName>
        <shortName evidence="1">AsnRS</shortName>
    </alternativeName>
</protein>
<keyword id="KW-0030">Aminoacyl-tRNA synthetase</keyword>
<keyword id="KW-0067">ATP-binding</keyword>
<keyword id="KW-0963">Cytoplasm</keyword>
<keyword id="KW-0436">Ligase</keyword>
<keyword id="KW-0547">Nucleotide-binding</keyword>
<keyword id="KW-0648">Protein biosynthesis</keyword>
<keyword id="KW-1185">Reference proteome</keyword>
<organism>
    <name type="scientific">Streptococcus thermophilus (strain ATCC BAA-250 / LMG 18311)</name>
    <dbReference type="NCBI Taxonomy" id="264199"/>
    <lineage>
        <taxon>Bacteria</taxon>
        <taxon>Bacillati</taxon>
        <taxon>Bacillota</taxon>
        <taxon>Bacilli</taxon>
        <taxon>Lactobacillales</taxon>
        <taxon>Streptococcaceae</taxon>
        <taxon>Streptococcus</taxon>
    </lineage>
</organism>
<reference key="1">
    <citation type="journal article" date="2004" name="Nat. Biotechnol.">
        <title>Complete sequence and comparative genome analysis of the dairy bacterium Streptococcus thermophilus.</title>
        <authorList>
            <person name="Bolotin A."/>
            <person name="Quinquis B."/>
            <person name="Renault P."/>
            <person name="Sorokin A."/>
            <person name="Ehrlich S.D."/>
            <person name="Kulakauskas S."/>
            <person name="Lapidus A."/>
            <person name="Goltsman E."/>
            <person name="Mazur M."/>
            <person name="Pusch G.D."/>
            <person name="Fonstein M."/>
            <person name="Overbeek R."/>
            <person name="Kyprides N."/>
            <person name="Purnelle B."/>
            <person name="Prozzi D."/>
            <person name="Ngui K."/>
            <person name="Masuy D."/>
            <person name="Hancy F."/>
            <person name="Burteau S."/>
            <person name="Boutry M."/>
            <person name="Delcour J."/>
            <person name="Goffeau A."/>
            <person name="Hols P."/>
        </authorList>
    </citation>
    <scope>NUCLEOTIDE SEQUENCE [LARGE SCALE GENOMIC DNA]</scope>
    <source>
        <strain>ATCC BAA-250 / LMG 18311</strain>
    </source>
</reference>
<accession>Q5M4S8</accession>
<evidence type="ECO:0000255" key="1">
    <source>
        <dbReference type="HAMAP-Rule" id="MF_00534"/>
    </source>
</evidence>
<dbReference type="EC" id="6.1.1.22" evidence="1"/>
<dbReference type="EMBL" id="CP000023">
    <property type="protein sequence ID" value="AAV60495.1"/>
    <property type="molecule type" value="Genomic_DNA"/>
</dbReference>
<dbReference type="RefSeq" id="WP_002950517.1">
    <property type="nucleotide sequence ID" value="NC_006448.1"/>
</dbReference>
<dbReference type="SMR" id="Q5M4S8"/>
<dbReference type="STRING" id="264199.stu0818"/>
<dbReference type="KEGG" id="stl:stu0818"/>
<dbReference type="PATRIC" id="fig|264199.4.peg.814"/>
<dbReference type="eggNOG" id="COG0017">
    <property type="taxonomic scope" value="Bacteria"/>
</dbReference>
<dbReference type="HOGENOM" id="CLU_004553_2_0_9"/>
<dbReference type="Proteomes" id="UP000001170">
    <property type="component" value="Chromosome"/>
</dbReference>
<dbReference type="GO" id="GO:0005737">
    <property type="term" value="C:cytoplasm"/>
    <property type="evidence" value="ECO:0007669"/>
    <property type="project" value="UniProtKB-SubCell"/>
</dbReference>
<dbReference type="GO" id="GO:0004816">
    <property type="term" value="F:asparagine-tRNA ligase activity"/>
    <property type="evidence" value="ECO:0007669"/>
    <property type="project" value="UniProtKB-UniRule"/>
</dbReference>
<dbReference type="GO" id="GO:0005524">
    <property type="term" value="F:ATP binding"/>
    <property type="evidence" value="ECO:0007669"/>
    <property type="project" value="UniProtKB-UniRule"/>
</dbReference>
<dbReference type="GO" id="GO:0140096">
    <property type="term" value="F:catalytic activity, acting on a protein"/>
    <property type="evidence" value="ECO:0007669"/>
    <property type="project" value="UniProtKB-ARBA"/>
</dbReference>
<dbReference type="GO" id="GO:0003676">
    <property type="term" value="F:nucleic acid binding"/>
    <property type="evidence" value="ECO:0007669"/>
    <property type="project" value="InterPro"/>
</dbReference>
<dbReference type="GO" id="GO:0016740">
    <property type="term" value="F:transferase activity"/>
    <property type="evidence" value="ECO:0007669"/>
    <property type="project" value="UniProtKB-ARBA"/>
</dbReference>
<dbReference type="GO" id="GO:0006421">
    <property type="term" value="P:asparaginyl-tRNA aminoacylation"/>
    <property type="evidence" value="ECO:0007669"/>
    <property type="project" value="UniProtKB-UniRule"/>
</dbReference>
<dbReference type="CDD" id="cd04323">
    <property type="entry name" value="AsnRS_cyto_like_N"/>
    <property type="match status" value="1"/>
</dbReference>
<dbReference type="CDD" id="cd00776">
    <property type="entry name" value="AsxRS_core"/>
    <property type="match status" value="1"/>
</dbReference>
<dbReference type="Gene3D" id="3.30.930.10">
    <property type="entry name" value="Bira Bifunctional Protein, Domain 2"/>
    <property type="match status" value="1"/>
</dbReference>
<dbReference type="Gene3D" id="2.40.50.140">
    <property type="entry name" value="Nucleic acid-binding proteins"/>
    <property type="match status" value="1"/>
</dbReference>
<dbReference type="HAMAP" id="MF_00534">
    <property type="entry name" value="Asn_tRNA_synth"/>
    <property type="match status" value="1"/>
</dbReference>
<dbReference type="InterPro" id="IPR004364">
    <property type="entry name" value="Aa-tRNA-synt_II"/>
</dbReference>
<dbReference type="InterPro" id="IPR006195">
    <property type="entry name" value="aa-tRNA-synth_II"/>
</dbReference>
<dbReference type="InterPro" id="IPR045864">
    <property type="entry name" value="aa-tRNA-synth_II/BPL/LPL"/>
</dbReference>
<dbReference type="InterPro" id="IPR004522">
    <property type="entry name" value="Asn-tRNA-ligase"/>
</dbReference>
<dbReference type="InterPro" id="IPR002312">
    <property type="entry name" value="Asp/Asn-tRNA-synth_IIb"/>
</dbReference>
<dbReference type="InterPro" id="IPR012340">
    <property type="entry name" value="NA-bd_OB-fold"/>
</dbReference>
<dbReference type="InterPro" id="IPR004365">
    <property type="entry name" value="NA-bd_OB_tRNA"/>
</dbReference>
<dbReference type="NCBIfam" id="TIGR00457">
    <property type="entry name" value="asnS"/>
    <property type="match status" value="1"/>
</dbReference>
<dbReference type="NCBIfam" id="NF003037">
    <property type="entry name" value="PRK03932.1"/>
    <property type="match status" value="1"/>
</dbReference>
<dbReference type="PANTHER" id="PTHR22594:SF34">
    <property type="entry name" value="ASPARAGINE--TRNA LIGASE, MITOCHONDRIAL-RELATED"/>
    <property type="match status" value="1"/>
</dbReference>
<dbReference type="PANTHER" id="PTHR22594">
    <property type="entry name" value="ASPARTYL/LYSYL-TRNA SYNTHETASE"/>
    <property type="match status" value="1"/>
</dbReference>
<dbReference type="Pfam" id="PF00152">
    <property type="entry name" value="tRNA-synt_2"/>
    <property type="match status" value="1"/>
</dbReference>
<dbReference type="Pfam" id="PF01336">
    <property type="entry name" value="tRNA_anti-codon"/>
    <property type="match status" value="1"/>
</dbReference>
<dbReference type="PRINTS" id="PR01042">
    <property type="entry name" value="TRNASYNTHASP"/>
</dbReference>
<dbReference type="SUPFAM" id="SSF55681">
    <property type="entry name" value="Class II aaRS and biotin synthetases"/>
    <property type="match status" value="1"/>
</dbReference>
<dbReference type="SUPFAM" id="SSF50249">
    <property type="entry name" value="Nucleic acid-binding proteins"/>
    <property type="match status" value="1"/>
</dbReference>
<dbReference type="PROSITE" id="PS50862">
    <property type="entry name" value="AA_TRNA_LIGASE_II"/>
    <property type="match status" value="1"/>
</dbReference>
<sequence length="448" mass="51109">MSKQLVSIIDVPKHIGEEITIGAWVANKSGKGKIAFLQLRDGTAFFQGVAFKPNFIEKFGEEEGLEKFDTIKHLSQETSIYVTGMVKEDERSKFGYELDITDIEVIGKSQDYPITPKEHGTDFLMDNRHLWLRSRKQMAIQQIRNAIIYATYDFFDKNGFIKFDSPILSSNAAEDSTELFETDYFGTPAFLSQSGQLYLEAGAMALGRVFDFGPVFRAEKSKTRRHLTEFWMMDAEYSFLSHDESLDLQEAYVKALIQGAIDRAPQALEILERDVDLLKKYIAEPFKRVSYDEAIDLLQAHENDEDTDYEHLEHGDDFGSPHETWISNYFGVPTFVVNYPASFKAFYMKPVPGNPERVLCADLLAPEGYGEIIGGSMREDDYDALVAKMEELGMDRSEYEFYLDLRKYGSVPHGGFGIGIERMVTFVAGTKHIREAIPFPRMLHRIKP</sequence>
<name>SYN_STRT2</name>